<organism>
    <name type="scientific">Leifsonia aquatica</name>
    <name type="common">Corynebacterium aquaticum</name>
    <dbReference type="NCBI Taxonomy" id="144185"/>
    <lineage>
        <taxon>Bacteria</taxon>
        <taxon>Bacillati</taxon>
        <taxon>Actinomycetota</taxon>
        <taxon>Actinomycetes</taxon>
        <taxon>Micrococcales</taxon>
        <taxon>Microbacteriaceae</taxon>
        <taxon>Leifsonia</taxon>
    </lineage>
</organism>
<proteinExistence type="evidence at protein level"/>
<accession>Q9LBG2</accession>
<feature type="chain" id="PRO_0000054721" description="Levodione reductase">
    <location>
        <begin position="1"/>
        <end position="267"/>
    </location>
</feature>
<feature type="active site" description="Proton acceptor">
    <location>
        <position position="165"/>
    </location>
</feature>
<feature type="binding site" evidence="1">
    <location>
        <begin position="17"/>
        <end position="42"/>
    </location>
    <ligand>
        <name>NAD(+)</name>
        <dbReference type="ChEBI" id="CHEBI:57540"/>
    </ligand>
</feature>
<feature type="binding site">
    <location>
        <position position="152"/>
    </location>
    <ligand>
        <name>substrate</name>
    </ligand>
</feature>
<feature type="site" description="Role in the determination of stereospecificity">
    <location>
        <position position="103"/>
    </location>
</feature>
<feature type="mutagenesis site" description="26-fold increase in Km and a much lower enantiomeric excess of the reaction products." evidence="1">
    <original>E</original>
    <variation>A</variation>
    <variation>D</variation>
    <variation>N</variation>
    <variation>Q</variation>
    <location>
        <position position="103"/>
    </location>
</feature>
<feature type="strand" evidence="3">
    <location>
        <begin position="15"/>
        <end position="19"/>
    </location>
</feature>
<feature type="turn" evidence="3">
    <location>
        <begin position="20"/>
        <end position="22"/>
    </location>
</feature>
<feature type="helix" evidence="3">
    <location>
        <begin position="24"/>
        <end position="35"/>
    </location>
</feature>
<feature type="strand" evidence="3">
    <location>
        <begin position="39"/>
        <end position="45"/>
    </location>
</feature>
<feature type="helix" evidence="3">
    <location>
        <begin position="47"/>
        <end position="60"/>
    </location>
</feature>
<feature type="strand" evidence="3">
    <location>
        <begin position="66"/>
        <end position="70"/>
    </location>
</feature>
<feature type="helix" evidence="3">
    <location>
        <begin position="76"/>
        <end position="90"/>
    </location>
</feature>
<feature type="strand" evidence="3">
    <location>
        <begin position="94"/>
        <end position="98"/>
    </location>
</feature>
<feature type="helix" evidence="3">
    <location>
        <begin position="109"/>
        <end position="111"/>
    </location>
</feature>
<feature type="helix" evidence="3">
    <location>
        <begin position="114"/>
        <end position="124"/>
    </location>
</feature>
<feature type="helix" evidence="3">
    <location>
        <begin position="126"/>
        <end position="142"/>
    </location>
</feature>
<feature type="strand" evidence="3">
    <location>
        <begin position="146"/>
        <end position="150"/>
    </location>
</feature>
<feature type="helix" evidence="3">
    <location>
        <begin position="153"/>
        <end position="155"/>
    </location>
</feature>
<feature type="strand" evidence="3">
    <location>
        <begin position="160"/>
        <end position="162"/>
    </location>
</feature>
<feature type="helix" evidence="3">
    <location>
        <begin position="163"/>
        <end position="183"/>
    </location>
</feature>
<feature type="helix" evidence="3">
    <location>
        <begin position="184"/>
        <end position="186"/>
    </location>
</feature>
<feature type="strand" evidence="3">
    <location>
        <begin position="189"/>
        <end position="195"/>
    </location>
</feature>
<feature type="helix" evidence="3">
    <location>
        <begin position="201"/>
        <end position="210"/>
    </location>
</feature>
<feature type="helix" evidence="3">
    <location>
        <begin position="215"/>
        <end position="223"/>
    </location>
</feature>
<feature type="helix" evidence="3">
    <location>
        <begin position="234"/>
        <end position="244"/>
    </location>
</feature>
<feature type="helix" evidence="3">
    <location>
        <begin position="247"/>
        <end position="249"/>
    </location>
</feature>
<feature type="strand" evidence="3">
    <location>
        <begin position="256"/>
        <end position="260"/>
    </location>
</feature>
<feature type="turn" evidence="3">
    <location>
        <begin position="261"/>
        <end position="265"/>
    </location>
</feature>
<evidence type="ECO:0000269" key="1">
    <source>
    </source>
</evidence>
<evidence type="ECO:0000305" key="2"/>
<evidence type="ECO:0007829" key="3">
    <source>
        <dbReference type="PDB" id="1IY8"/>
    </source>
</evidence>
<name>LVR_LEIAQ</name>
<keyword id="KW-0002">3D-structure</keyword>
<keyword id="KW-0903">Direct protein sequencing</keyword>
<keyword id="KW-0520">NAD</keyword>
<keyword id="KW-0560">Oxidoreductase</keyword>
<comment type="function">
    <text>Catalyzes the regio- and stereoselective reversible NAD-dependent reduction of (6R)-2,2,6-trimethyl-1,4-cyclohexanedione (levodione) to (4R,6R)-4-hydroxy-2,2,6-trimethylcyclohexanone (actinol).</text>
</comment>
<comment type="catalytic activity">
    <reaction>
        <text>(4R)-hydroxy-(6R)-2,2,6-trimethylcyclohexanone + NAD(+) = (6R)-2,2,6-trimethyl-1,4-cyclohexanedione + NADH + H(+)</text>
        <dbReference type="Rhea" id="RHEA:46676"/>
        <dbReference type="ChEBI" id="CHEBI:15378"/>
        <dbReference type="ChEBI" id="CHEBI:57540"/>
        <dbReference type="ChEBI" id="CHEBI:57945"/>
        <dbReference type="ChEBI" id="CHEBI:86399"/>
        <dbReference type="ChEBI" id="CHEBI:86400"/>
    </reaction>
</comment>
<comment type="activity regulation">
    <text>Strongly activated by monovalent cations, such as K(+), Na(+), and NH4(+).</text>
</comment>
<comment type="similarity">
    <text evidence="2">Belongs to the short-chain dehydrogenases/reductases (SDR) family.</text>
</comment>
<protein>
    <recommendedName>
        <fullName>Levodione reductase</fullName>
        <ecNumber>1.1.1.-</ecNumber>
    </recommendedName>
    <alternativeName>
        <fullName>(6R)-2,2,6-trimethyl-1,4-cyclohexanedione reductase</fullName>
    </alternativeName>
</protein>
<dbReference type="EC" id="1.1.1.-"/>
<dbReference type="EMBL" id="AB042262">
    <property type="protein sequence ID" value="BAA95121.1"/>
    <property type="molecule type" value="Genomic_DNA"/>
</dbReference>
<dbReference type="PDB" id="1IY8">
    <property type="method" value="X-ray"/>
    <property type="resolution" value="1.60 A"/>
    <property type="chains" value="A/B/C/D/E/F/G/H=1-267"/>
</dbReference>
<dbReference type="PDBsum" id="1IY8"/>
<dbReference type="SMR" id="Q9LBG2"/>
<dbReference type="BioCyc" id="MetaCyc:MONOMER-20560"/>
<dbReference type="EvolutionaryTrace" id="Q9LBG2"/>
<dbReference type="GO" id="GO:0016491">
    <property type="term" value="F:oxidoreductase activity"/>
    <property type="evidence" value="ECO:0007669"/>
    <property type="project" value="UniProtKB-KW"/>
</dbReference>
<dbReference type="CDD" id="cd05330">
    <property type="entry name" value="cyclohexanol_reductase_SDR_c"/>
    <property type="match status" value="1"/>
</dbReference>
<dbReference type="FunFam" id="3.40.50.720:FF:000084">
    <property type="entry name" value="Short-chain dehydrogenase reductase"/>
    <property type="match status" value="1"/>
</dbReference>
<dbReference type="Gene3D" id="3.40.50.720">
    <property type="entry name" value="NAD(P)-binding Rossmann-like Domain"/>
    <property type="match status" value="1"/>
</dbReference>
<dbReference type="InterPro" id="IPR036291">
    <property type="entry name" value="NAD(P)-bd_dom_sf"/>
</dbReference>
<dbReference type="InterPro" id="IPR002347">
    <property type="entry name" value="SDR_fam"/>
</dbReference>
<dbReference type="NCBIfam" id="NF005559">
    <property type="entry name" value="PRK07231.1"/>
    <property type="match status" value="1"/>
</dbReference>
<dbReference type="PANTHER" id="PTHR24321">
    <property type="entry name" value="DEHYDROGENASES, SHORT CHAIN"/>
    <property type="match status" value="1"/>
</dbReference>
<dbReference type="PANTHER" id="PTHR24321:SF8">
    <property type="entry name" value="ESTRADIOL 17-BETA-DEHYDROGENASE 8-RELATED"/>
    <property type="match status" value="1"/>
</dbReference>
<dbReference type="Pfam" id="PF13561">
    <property type="entry name" value="adh_short_C2"/>
    <property type="match status" value="1"/>
</dbReference>
<dbReference type="PRINTS" id="PR00081">
    <property type="entry name" value="GDHRDH"/>
</dbReference>
<dbReference type="PRINTS" id="PR00080">
    <property type="entry name" value="SDRFAMILY"/>
</dbReference>
<dbReference type="SMART" id="SM00822">
    <property type="entry name" value="PKS_KR"/>
    <property type="match status" value="1"/>
</dbReference>
<dbReference type="SUPFAM" id="SSF51735">
    <property type="entry name" value="NAD(P)-binding Rossmann-fold domains"/>
    <property type="match status" value="1"/>
</dbReference>
<reference key="1">
    <citation type="journal article" date="2001" name="Biosci. Biotechnol. Biochem.">
        <title>Cloning, sequence analysis, and expression in Escherichia coli of the gene encoding monovalent cation-activated levodione reductase from Corynebacterium aquaticum M-13.</title>
        <authorList>
            <person name="Yoshisumi A."/>
            <person name="Wada M."/>
            <person name="Takagi H."/>
            <person name="Shimizu S."/>
            <person name="Nakamori S."/>
        </authorList>
    </citation>
    <scope>NUCLEOTIDE SEQUENCE [GENOMIC DNA]</scope>
    <source>
        <strain>M-13</strain>
    </source>
</reference>
<reference key="2">
    <citation type="journal article" date="1999" name="Appl. Environ. Microbiol.">
        <title>Purification and characterization of monovalent cation-activated levodione reductase from Corynebacterium aquaticum M-13.</title>
        <authorList>
            <person name="Wada M."/>
            <person name="Yoshizumi A."/>
            <person name="Nakamori S."/>
            <person name="Shimizu S."/>
        </authorList>
    </citation>
    <scope>PARTIAL PROTEIN SEQUENCE</scope>
    <scope>CHARACTERIZATION</scope>
    <source>
        <strain>M-13</strain>
    </source>
</reference>
<reference key="3">
    <citation type="journal article" date="2003" name="J. Biol. Chem.">
        <title>The crystal structure and stereospecificity of levodione reductase from Corynebacterium aquaticum M-13.</title>
        <authorList>
            <person name="Sogabe S."/>
            <person name="Yoshizumi A."/>
            <person name="Fukami T.A."/>
            <person name="Shiratori Y."/>
            <person name="Shimizu S."/>
            <person name="Takagi H."/>
            <person name="Nakamori S."/>
            <person name="Wada M."/>
        </authorList>
    </citation>
    <scope>X-RAY CRYSTALLOGRAPHY (1.6 ANGSTROMS) IN COMPLEX WITH NAD AND INHIBITOR</scope>
    <scope>MUTAGENESIS OF GLU-103</scope>
    <source>
        <strain>M-13</strain>
    </source>
</reference>
<gene>
    <name type="primary">lvr</name>
</gene>
<sequence>MTATSSPTTRFTDRVVLITGGGSGLGRATAVRLAAEGAKLSLVDVSSEGLEASKAAVLETAPDAEVLTTVADVSDEAQVEAYVTATTERFGRIDGFFNNAGIEGKQNPTESFTAAEFDKVVSINLRGVFLGLEKVLKIMREQGSGMVVNTASVGGIRGIGNQSGYAAAKHGVVGLTRNSAVEYGRYGIRINAIAPGAIWTPMVENSMKQLDPENPRKAAEEFIQVNPSKRYGEAPEIAAVVAFLLSDDASYVNATVVPIDGGQSAAY</sequence>